<keyword id="KW-0378">Hydrolase</keyword>
<keyword id="KW-0472">Membrane</keyword>
<keyword id="KW-0496">Mitochondrion</keyword>
<keyword id="KW-1000">Mitochondrion outer membrane</keyword>
<keyword id="KW-0645">Protease</keyword>
<keyword id="KW-1185">Reference proteome</keyword>
<keyword id="KW-0788">Thiol protease</keyword>
<keyword id="KW-0812">Transmembrane</keyword>
<keyword id="KW-1133">Transmembrane helix</keyword>
<keyword id="KW-0833">Ubl conjugation pathway</keyword>
<protein>
    <recommendedName>
        <fullName>Ubiquitin carboxyl-terminal hydrolase 30 homolog</fullName>
        <shortName>dUSP30</shortName>
        <ecNumber>3.4.19.12</ecNumber>
    </recommendedName>
    <alternativeName>
        <fullName>Deubiquitinating enzyme 30 homolog</fullName>
    </alternativeName>
    <alternativeName>
        <fullName>Ubiquitin thioesterase 30 homolog</fullName>
    </alternativeName>
    <alternativeName>
        <fullName>Ubiquitin-specific-processing protease 30 homolog</fullName>
        <shortName>Ub-specific protease 30 homolog</shortName>
    </alternativeName>
</protein>
<dbReference type="EC" id="3.4.19.12"/>
<dbReference type="EMBL" id="AE014298">
    <property type="protein sequence ID" value="AAF46096.1"/>
    <property type="molecule type" value="Genomic_DNA"/>
</dbReference>
<dbReference type="EMBL" id="AY069649">
    <property type="protein sequence ID" value="AAL39794.1"/>
    <property type="molecule type" value="mRNA"/>
</dbReference>
<dbReference type="EMBL" id="AE014298">
    <property type="protein sequence ID" value="AHN59383.1"/>
    <property type="molecule type" value="Genomic_DNA"/>
</dbReference>
<dbReference type="RefSeq" id="NP_001284912.1">
    <property type="nucleotide sequence ID" value="NM_001297983.1"/>
</dbReference>
<dbReference type="RefSeq" id="NP_572274.1">
    <property type="nucleotide sequence ID" value="NM_132046.3"/>
</dbReference>
<dbReference type="SMR" id="Q9W462"/>
<dbReference type="BioGRID" id="58018">
    <property type="interactions" value="9"/>
</dbReference>
<dbReference type="FunCoup" id="Q9W462">
    <property type="interactions" value="1992"/>
</dbReference>
<dbReference type="IntAct" id="Q9W462">
    <property type="interactions" value="4"/>
</dbReference>
<dbReference type="STRING" id="7227.FBpp0070793"/>
<dbReference type="PaxDb" id="7227-FBpp0070793"/>
<dbReference type="DNASU" id="31519"/>
<dbReference type="EnsemblMetazoa" id="FBtr0070828">
    <property type="protein sequence ID" value="FBpp0070793"/>
    <property type="gene ID" value="FBgn0029819"/>
</dbReference>
<dbReference type="EnsemblMetazoa" id="FBtr0343537">
    <property type="protein sequence ID" value="FBpp0310141"/>
    <property type="gene ID" value="FBgn0029819"/>
</dbReference>
<dbReference type="GeneID" id="31519"/>
<dbReference type="KEGG" id="dme:Dmel_CG3016"/>
<dbReference type="UCSC" id="CG3016-RA">
    <property type="organism name" value="d. melanogaster"/>
</dbReference>
<dbReference type="AGR" id="FB:FBgn0029819"/>
<dbReference type="CTD" id="84749"/>
<dbReference type="FlyBase" id="FBgn0029819">
    <property type="gene designation" value="Usp30"/>
</dbReference>
<dbReference type="VEuPathDB" id="VectorBase:FBgn0029819"/>
<dbReference type="eggNOG" id="KOG1867">
    <property type="taxonomic scope" value="Eukaryota"/>
</dbReference>
<dbReference type="GeneTree" id="ENSGT00550000075075"/>
<dbReference type="HOGENOM" id="CLU_008279_14_0_1"/>
<dbReference type="InParanoid" id="Q9W462"/>
<dbReference type="OMA" id="CEREGND"/>
<dbReference type="OrthoDB" id="2248014at2759"/>
<dbReference type="PhylomeDB" id="Q9W462"/>
<dbReference type="Reactome" id="R-DME-5689880">
    <property type="pathway name" value="Ub-specific processing proteases"/>
</dbReference>
<dbReference type="Reactome" id="R-DME-9664873">
    <property type="pathway name" value="Pexophagy"/>
</dbReference>
<dbReference type="BioGRID-ORCS" id="31519">
    <property type="hits" value="0 hits in 1 CRISPR screen"/>
</dbReference>
<dbReference type="GenomeRNAi" id="31519"/>
<dbReference type="PRO" id="PR:Q9W462"/>
<dbReference type="Proteomes" id="UP000000803">
    <property type="component" value="Chromosome X"/>
</dbReference>
<dbReference type="Bgee" id="FBgn0029819">
    <property type="expression patterns" value="Expressed in eye disc (Drosophila) and 124 other cell types or tissues"/>
</dbReference>
<dbReference type="GO" id="GO:0005829">
    <property type="term" value="C:cytosol"/>
    <property type="evidence" value="ECO:0000318"/>
    <property type="project" value="GO_Central"/>
</dbReference>
<dbReference type="GO" id="GO:0005741">
    <property type="term" value="C:mitochondrial outer membrane"/>
    <property type="evidence" value="ECO:0000250"/>
    <property type="project" value="FlyBase"/>
</dbReference>
<dbReference type="GO" id="GO:0005634">
    <property type="term" value="C:nucleus"/>
    <property type="evidence" value="ECO:0000318"/>
    <property type="project" value="GO_Central"/>
</dbReference>
<dbReference type="GO" id="GO:0004843">
    <property type="term" value="F:cysteine-type deubiquitinase activity"/>
    <property type="evidence" value="ECO:0000250"/>
    <property type="project" value="FlyBase"/>
</dbReference>
<dbReference type="GO" id="GO:1901525">
    <property type="term" value="P:negative regulation of mitophagy"/>
    <property type="evidence" value="ECO:0000315"/>
    <property type="project" value="FlyBase"/>
</dbReference>
<dbReference type="GO" id="GO:0035871">
    <property type="term" value="P:protein K11-linked deubiquitination"/>
    <property type="evidence" value="ECO:0000250"/>
    <property type="project" value="UniProtKB"/>
</dbReference>
<dbReference type="GO" id="GO:0044313">
    <property type="term" value="P:protein K6-linked deubiquitination"/>
    <property type="evidence" value="ECO:0000250"/>
    <property type="project" value="UniProtKB"/>
</dbReference>
<dbReference type="GO" id="GO:0006508">
    <property type="term" value="P:proteolysis"/>
    <property type="evidence" value="ECO:0007669"/>
    <property type="project" value="UniProtKB-KW"/>
</dbReference>
<dbReference type="GO" id="GO:0031647">
    <property type="term" value="P:regulation of protein stability"/>
    <property type="evidence" value="ECO:0000318"/>
    <property type="project" value="GO_Central"/>
</dbReference>
<dbReference type="CDD" id="cd02662">
    <property type="entry name" value="Peptidase_C19F"/>
    <property type="match status" value="1"/>
</dbReference>
<dbReference type="FunFam" id="3.90.70.10:FF:000310">
    <property type="entry name" value="Ubiquitin carboxyl-terminal hydrolase 30 homolog"/>
    <property type="match status" value="1"/>
</dbReference>
<dbReference type="Gene3D" id="3.90.70.10">
    <property type="entry name" value="Cysteine proteinases"/>
    <property type="match status" value="2"/>
</dbReference>
<dbReference type="InterPro" id="IPR038765">
    <property type="entry name" value="Papain-like_cys_pep_sf"/>
</dbReference>
<dbReference type="InterPro" id="IPR050164">
    <property type="entry name" value="Peptidase_C19"/>
</dbReference>
<dbReference type="InterPro" id="IPR001394">
    <property type="entry name" value="Peptidase_C19_UCH"/>
</dbReference>
<dbReference type="InterPro" id="IPR018200">
    <property type="entry name" value="USP_CS"/>
</dbReference>
<dbReference type="InterPro" id="IPR028889">
    <property type="entry name" value="USP_dom"/>
</dbReference>
<dbReference type="PANTHER" id="PTHR24006">
    <property type="entry name" value="UBIQUITIN CARBOXYL-TERMINAL HYDROLASE"/>
    <property type="match status" value="1"/>
</dbReference>
<dbReference type="PANTHER" id="PTHR24006:SF888">
    <property type="entry name" value="UBIQUITIN CARBOXYL-TERMINAL HYDROLASE 30"/>
    <property type="match status" value="1"/>
</dbReference>
<dbReference type="Pfam" id="PF00443">
    <property type="entry name" value="UCH"/>
    <property type="match status" value="1"/>
</dbReference>
<dbReference type="SUPFAM" id="SSF54001">
    <property type="entry name" value="Cysteine proteinases"/>
    <property type="match status" value="1"/>
</dbReference>
<dbReference type="PROSITE" id="PS00973">
    <property type="entry name" value="USP_2"/>
    <property type="match status" value="1"/>
</dbReference>
<dbReference type="PROSITE" id="PS50235">
    <property type="entry name" value="USP_3"/>
    <property type="match status" value="1"/>
</dbReference>
<name>UBP30_DROME</name>
<feature type="chain" id="PRO_0000430252" description="Ubiquitin carboxyl-terminal hydrolase 30 homolog">
    <location>
        <begin position="1"/>
        <end position="558"/>
    </location>
</feature>
<feature type="transmembrane region" description="Helical" evidence="2">
    <location>
        <begin position="6"/>
        <end position="26"/>
    </location>
</feature>
<feature type="domain" description="USP">
    <location>
        <begin position="39"/>
        <end position="550"/>
    </location>
</feature>
<feature type="region of interest" description="Disordered" evidence="4">
    <location>
        <begin position="267"/>
        <end position="300"/>
    </location>
</feature>
<feature type="compositionally biased region" description="Low complexity" evidence="4">
    <location>
        <begin position="280"/>
        <end position="289"/>
    </location>
</feature>
<feature type="active site" description="Nucleophile" evidence="3">
    <location>
        <position position="48"/>
    </location>
</feature>
<feature type="active site" description="Proton acceptor" evidence="3">
    <location>
        <position position="506"/>
    </location>
</feature>
<evidence type="ECO:0000250" key="1">
    <source>
        <dbReference type="UniProtKB" id="Q70CQ3"/>
    </source>
</evidence>
<evidence type="ECO:0000255" key="2"/>
<evidence type="ECO:0000255" key="3">
    <source>
        <dbReference type="PROSITE-ProRule" id="PRU10093"/>
    </source>
</evidence>
<evidence type="ECO:0000256" key="4">
    <source>
        <dbReference type="SAM" id="MobiDB-lite"/>
    </source>
</evidence>
<evidence type="ECO:0000269" key="5">
    <source>
    </source>
</evidence>
<evidence type="ECO:0000305" key="6"/>
<evidence type="ECO:0000312" key="7">
    <source>
        <dbReference type="FlyBase" id="FBgn0029819"/>
    </source>
</evidence>
<comment type="function">
    <text evidence="5">Deubiquitinating enzyme that acts as a key inhibitor of mitophagy by counteracting the action of parkin (park).</text>
</comment>
<comment type="catalytic activity">
    <reaction evidence="1">
        <text>Thiol-dependent hydrolysis of ester, thioester, amide, peptide and isopeptide bonds formed by the C-terminal Gly of ubiquitin (a 76-residue protein attached to proteins as an intracellular targeting signal).</text>
        <dbReference type="EC" id="3.4.19.12"/>
    </reaction>
</comment>
<comment type="subcellular location">
    <subcellularLocation>
        <location evidence="1">Mitochondrion outer membrane</location>
    </subcellularLocation>
</comment>
<comment type="disruption phenotype">
    <text evidence="5">RNAi-mediated knockdown rescues the defective mitophagy caused by mutations in parkin and improves mitochondrial integrity in park- or PINK1-deficient flies. Moreover, knockdown in dopaminergic neurons protects flies against paraquat herbicide toxicity in vivo, ameliorating defects in dopamine levels, motor function and organismal survival.</text>
</comment>
<comment type="similarity">
    <text evidence="6">Belongs to the peptidase C19 family.</text>
</comment>
<gene>
    <name evidence="7" type="primary">Usp30</name>
    <name evidence="7" type="ORF">CG3016</name>
</gene>
<proteinExistence type="evidence at transcript level"/>
<organism>
    <name type="scientific">Drosophila melanogaster</name>
    <name type="common">Fruit fly</name>
    <dbReference type="NCBI Taxonomy" id="7227"/>
    <lineage>
        <taxon>Eukaryota</taxon>
        <taxon>Metazoa</taxon>
        <taxon>Ecdysozoa</taxon>
        <taxon>Arthropoda</taxon>
        <taxon>Hexapoda</taxon>
        <taxon>Insecta</taxon>
        <taxon>Pterygota</taxon>
        <taxon>Neoptera</taxon>
        <taxon>Endopterygota</taxon>
        <taxon>Diptera</taxon>
        <taxon>Brachycera</taxon>
        <taxon>Muscomorpha</taxon>
        <taxon>Ephydroidea</taxon>
        <taxon>Drosophilidae</taxon>
        <taxon>Drosophila</taxon>
        <taxon>Sophophora</taxon>
    </lineage>
</organism>
<sequence>MESEKILMAAGVTVAAVVGAFVFWGPSGSRLRQRRGQIAGLHNFGLTCFLNTLLQAMAACPQFIAWLQLYNNASPDRKSLITSMLNTLEVVNGTHATLRGDPYSPGAVLRALNALGWVIPQEEHDAHELFHVLLTCLEEEAIRPQPLGCLSDALPTDNDDNSSLAGTATPVGGFRSFSSMAAGLGASQRIGDQPNRPSSAMLTDFLNMEYDESTSLQRLVRSEAHTPDSPASVCERDGNDRLGSVLLDAVSPGTPFGFPLVSNPDSLATPMLGGERSSRPRLPQSQQQQDEGLNRRVSSSCRSLERLHRGPGRVSIWSNMMPSQVAHPFQGAMGAQIVCNGCGSKSAVRYDKFDSITLNLPPQRRTGLSLGHLLSEYITSEDLSDVKCDSCNETTTHTKSVTFAKLPACLCIHVARTVWLPTGQVCKRKDYVHFPESLSMAPYSFVQPHLNSQAGTPWGSTMSLYSSSLPMNNGVGGGEGFGTMFPKNLYRLLAVVVHSGEANSGHFVTYRRGSLRNAHRWYYTSDTIVREVSIDEVLSVPAYLLFYDRGQQRQLNLR</sequence>
<accession>Q9W462</accession>
<reference key="1">
    <citation type="journal article" date="2000" name="Science">
        <title>The genome sequence of Drosophila melanogaster.</title>
        <authorList>
            <person name="Adams M.D."/>
            <person name="Celniker S.E."/>
            <person name="Holt R.A."/>
            <person name="Evans C.A."/>
            <person name="Gocayne J.D."/>
            <person name="Amanatides P.G."/>
            <person name="Scherer S.E."/>
            <person name="Li P.W."/>
            <person name="Hoskins R.A."/>
            <person name="Galle R.F."/>
            <person name="George R.A."/>
            <person name="Lewis S.E."/>
            <person name="Richards S."/>
            <person name="Ashburner M."/>
            <person name="Henderson S.N."/>
            <person name="Sutton G.G."/>
            <person name="Wortman J.R."/>
            <person name="Yandell M.D."/>
            <person name="Zhang Q."/>
            <person name="Chen L.X."/>
            <person name="Brandon R.C."/>
            <person name="Rogers Y.-H.C."/>
            <person name="Blazej R.G."/>
            <person name="Champe M."/>
            <person name="Pfeiffer B.D."/>
            <person name="Wan K.H."/>
            <person name="Doyle C."/>
            <person name="Baxter E.G."/>
            <person name="Helt G."/>
            <person name="Nelson C.R."/>
            <person name="Miklos G.L.G."/>
            <person name="Abril J.F."/>
            <person name="Agbayani A."/>
            <person name="An H.-J."/>
            <person name="Andrews-Pfannkoch C."/>
            <person name="Baldwin D."/>
            <person name="Ballew R.M."/>
            <person name="Basu A."/>
            <person name="Baxendale J."/>
            <person name="Bayraktaroglu L."/>
            <person name="Beasley E.M."/>
            <person name="Beeson K.Y."/>
            <person name="Benos P.V."/>
            <person name="Berman B.P."/>
            <person name="Bhandari D."/>
            <person name="Bolshakov S."/>
            <person name="Borkova D."/>
            <person name="Botchan M.R."/>
            <person name="Bouck J."/>
            <person name="Brokstein P."/>
            <person name="Brottier P."/>
            <person name="Burtis K.C."/>
            <person name="Busam D.A."/>
            <person name="Butler H."/>
            <person name="Cadieu E."/>
            <person name="Center A."/>
            <person name="Chandra I."/>
            <person name="Cherry J.M."/>
            <person name="Cawley S."/>
            <person name="Dahlke C."/>
            <person name="Davenport L.B."/>
            <person name="Davies P."/>
            <person name="de Pablos B."/>
            <person name="Delcher A."/>
            <person name="Deng Z."/>
            <person name="Mays A.D."/>
            <person name="Dew I."/>
            <person name="Dietz S.M."/>
            <person name="Dodson K."/>
            <person name="Doup L.E."/>
            <person name="Downes M."/>
            <person name="Dugan-Rocha S."/>
            <person name="Dunkov B.C."/>
            <person name="Dunn P."/>
            <person name="Durbin K.J."/>
            <person name="Evangelista C.C."/>
            <person name="Ferraz C."/>
            <person name="Ferriera S."/>
            <person name="Fleischmann W."/>
            <person name="Fosler C."/>
            <person name="Gabrielian A.E."/>
            <person name="Garg N.S."/>
            <person name="Gelbart W.M."/>
            <person name="Glasser K."/>
            <person name="Glodek A."/>
            <person name="Gong F."/>
            <person name="Gorrell J.H."/>
            <person name="Gu Z."/>
            <person name="Guan P."/>
            <person name="Harris M."/>
            <person name="Harris N.L."/>
            <person name="Harvey D.A."/>
            <person name="Heiman T.J."/>
            <person name="Hernandez J.R."/>
            <person name="Houck J."/>
            <person name="Hostin D."/>
            <person name="Houston K.A."/>
            <person name="Howland T.J."/>
            <person name="Wei M.-H."/>
            <person name="Ibegwam C."/>
            <person name="Jalali M."/>
            <person name="Kalush F."/>
            <person name="Karpen G.H."/>
            <person name="Ke Z."/>
            <person name="Kennison J.A."/>
            <person name="Ketchum K.A."/>
            <person name="Kimmel B.E."/>
            <person name="Kodira C.D."/>
            <person name="Kraft C.L."/>
            <person name="Kravitz S."/>
            <person name="Kulp D."/>
            <person name="Lai Z."/>
            <person name="Lasko P."/>
            <person name="Lei Y."/>
            <person name="Levitsky A.A."/>
            <person name="Li J.H."/>
            <person name="Li Z."/>
            <person name="Liang Y."/>
            <person name="Lin X."/>
            <person name="Liu X."/>
            <person name="Mattei B."/>
            <person name="McIntosh T.C."/>
            <person name="McLeod M.P."/>
            <person name="McPherson D."/>
            <person name="Merkulov G."/>
            <person name="Milshina N.V."/>
            <person name="Mobarry C."/>
            <person name="Morris J."/>
            <person name="Moshrefi A."/>
            <person name="Mount S.M."/>
            <person name="Moy M."/>
            <person name="Murphy B."/>
            <person name="Murphy L."/>
            <person name="Muzny D.M."/>
            <person name="Nelson D.L."/>
            <person name="Nelson D.R."/>
            <person name="Nelson K.A."/>
            <person name="Nixon K."/>
            <person name="Nusskern D.R."/>
            <person name="Pacleb J.M."/>
            <person name="Palazzolo M."/>
            <person name="Pittman G.S."/>
            <person name="Pan S."/>
            <person name="Pollard J."/>
            <person name="Puri V."/>
            <person name="Reese M.G."/>
            <person name="Reinert K."/>
            <person name="Remington K."/>
            <person name="Saunders R.D.C."/>
            <person name="Scheeler F."/>
            <person name="Shen H."/>
            <person name="Shue B.C."/>
            <person name="Siden-Kiamos I."/>
            <person name="Simpson M."/>
            <person name="Skupski M.P."/>
            <person name="Smith T.J."/>
            <person name="Spier E."/>
            <person name="Spradling A.C."/>
            <person name="Stapleton M."/>
            <person name="Strong R."/>
            <person name="Sun E."/>
            <person name="Svirskas R."/>
            <person name="Tector C."/>
            <person name="Turner R."/>
            <person name="Venter E."/>
            <person name="Wang A.H."/>
            <person name="Wang X."/>
            <person name="Wang Z.-Y."/>
            <person name="Wassarman D.A."/>
            <person name="Weinstock G.M."/>
            <person name="Weissenbach J."/>
            <person name="Williams S.M."/>
            <person name="Woodage T."/>
            <person name="Worley K.C."/>
            <person name="Wu D."/>
            <person name="Yang S."/>
            <person name="Yao Q.A."/>
            <person name="Ye J."/>
            <person name="Yeh R.-F."/>
            <person name="Zaveri J.S."/>
            <person name="Zhan M."/>
            <person name="Zhang G."/>
            <person name="Zhao Q."/>
            <person name="Zheng L."/>
            <person name="Zheng X.H."/>
            <person name="Zhong F.N."/>
            <person name="Zhong W."/>
            <person name="Zhou X."/>
            <person name="Zhu S.C."/>
            <person name="Zhu X."/>
            <person name="Smith H.O."/>
            <person name="Gibbs R.A."/>
            <person name="Myers E.W."/>
            <person name="Rubin G.M."/>
            <person name="Venter J.C."/>
        </authorList>
    </citation>
    <scope>NUCLEOTIDE SEQUENCE [LARGE SCALE GENOMIC DNA]</scope>
    <source>
        <strain>Berkeley</strain>
    </source>
</reference>
<reference key="2">
    <citation type="journal article" date="2002" name="Genome Biol.">
        <title>Annotation of the Drosophila melanogaster euchromatic genome: a systematic review.</title>
        <authorList>
            <person name="Misra S."/>
            <person name="Crosby M.A."/>
            <person name="Mungall C.J."/>
            <person name="Matthews B.B."/>
            <person name="Campbell K.S."/>
            <person name="Hradecky P."/>
            <person name="Huang Y."/>
            <person name="Kaminker J.S."/>
            <person name="Millburn G.H."/>
            <person name="Prochnik S.E."/>
            <person name="Smith C.D."/>
            <person name="Tupy J.L."/>
            <person name="Whitfield E.J."/>
            <person name="Bayraktaroglu L."/>
            <person name="Berman B.P."/>
            <person name="Bettencourt B.R."/>
            <person name="Celniker S.E."/>
            <person name="de Grey A.D.N.J."/>
            <person name="Drysdale R.A."/>
            <person name="Harris N.L."/>
            <person name="Richter J."/>
            <person name="Russo S."/>
            <person name="Schroeder A.J."/>
            <person name="Shu S.Q."/>
            <person name="Stapleton M."/>
            <person name="Yamada C."/>
            <person name="Ashburner M."/>
            <person name="Gelbart W.M."/>
            <person name="Rubin G.M."/>
            <person name="Lewis S.E."/>
        </authorList>
    </citation>
    <scope>GENOME REANNOTATION</scope>
    <source>
        <strain>Berkeley</strain>
    </source>
</reference>
<reference key="3">
    <citation type="journal article" date="2002" name="Genome Biol.">
        <title>A Drosophila full-length cDNA resource.</title>
        <authorList>
            <person name="Stapleton M."/>
            <person name="Carlson J.W."/>
            <person name="Brokstein P."/>
            <person name="Yu C."/>
            <person name="Champe M."/>
            <person name="George R.A."/>
            <person name="Guarin H."/>
            <person name="Kronmiller B."/>
            <person name="Pacleb J.M."/>
            <person name="Park S."/>
            <person name="Wan K.H."/>
            <person name="Rubin G.M."/>
            <person name="Celniker S.E."/>
        </authorList>
    </citation>
    <scope>NUCLEOTIDE SEQUENCE [LARGE SCALE MRNA]</scope>
    <source>
        <strain>Berkeley</strain>
        <tissue>Embryo</tissue>
    </source>
</reference>
<reference key="4">
    <citation type="journal article" date="2014" name="Nature">
        <title>The mitochondrial deubiquitinase USP30 opposes parkin-mediated mitophagy.</title>
        <authorList>
            <person name="Bingol B."/>
            <person name="Tea J.S."/>
            <person name="Phu L."/>
            <person name="Reichelt M."/>
            <person name="Bakalarski C.E."/>
            <person name="Song Q."/>
            <person name="Foreman O."/>
            <person name="Kirkpatrick D.S."/>
            <person name="Sheng M."/>
        </authorList>
    </citation>
    <scope>FUNCTION</scope>
    <scope>DISRUPTION PHENOTYPE</scope>
</reference>